<proteinExistence type="evidence at transcript level"/>
<dbReference type="EMBL" id="AY764285">
    <property type="protein sequence ID" value="AAV68308.1"/>
    <property type="molecule type" value="mRNA"/>
</dbReference>
<dbReference type="RefSeq" id="NP_001008552.1">
    <property type="nucleotide sequence ID" value="NM_001008552.1"/>
</dbReference>
<dbReference type="SMR" id="Q5Q9Z2"/>
<dbReference type="FunCoup" id="Q5Q9Z2">
    <property type="interactions" value="394"/>
</dbReference>
<dbReference type="STRING" id="9615.ENSCAFP00000007687"/>
<dbReference type="PaxDb" id="9615-ENSCAFP00000007687"/>
<dbReference type="GeneID" id="494000"/>
<dbReference type="KEGG" id="cfa:494000"/>
<dbReference type="CTD" id="7428"/>
<dbReference type="InParanoid" id="Q5Q9Z2"/>
<dbReference type="OrthoDB" id="23491at33554"/>
<dbReference type="UniPathway" id="UPA00143"/>
<dbReference type="Proteomes" id="UP000002254">
    <property type="component" value="Unplaced"/>
</dbReference>
<dbReference type="Proteomes" id="UP000694429">
    <property type="component" value="Unplaced"/>
</dbReference>
<dbReference type="Proteomes" id="UP000694542">
    <property type="component" value="Unplaced"/>
</dbReference>
<dbReference type="Proteomes" id="UP000805418">
    <property type="component" value="Unplaced"/>
</dbReference>
<dbReference type="GO" id="GO:0005783">
    <property type="term" value="C:endoplasmic reticulum"/>
    <property type="evidence" value="ECO:0000250"/>
    <property type="project" value="UniProtKB"/>
</dbReference>
<dbReference type="GO" id="GO:0005634">
    <property type="term" value="C:nucleus"/>
    <property type="evidence" value="ECO:0000318"/>
    <property type="project" value="GO_Central"/>
</dbReference>
<dbReference type="GO" id="GO:0005886">
    <property type="term" value="C:plasma membrane"/>
    <property type="evidence" value="ECO:0007669"/>
    <property type="project" value="UniProtKB-SubCell"/>
</dbReference>
<dbReference type="GO" id="GO:0030891">
    <property type="term" value="C:VCB complex"/>
    <property type="evidence" value="ECO:0000318"/>
    <property type="project" value="GO_Central"/>
</dbReference>
<dbReference type="GO" id="GO:1990756">
    <property type="term" value="F:ubiquitin-like ligase-substrate adaptor activity"/>
    <property type="evidence" value="ECO:0000250"/>
    <property type="project" value="UniProtKB"/>
</dbReference>
<dbReference type="GO" id="GO:1904262">
    <property type="term" value="P:negative regulation of TORC1 signaling"/>
    <property type="evidence" value="ECO:0000250"/>
    <property type="project" value="UniProtKB"/>
</dbReference>
<dbReference type="GO" id="GO:0043161">
    <property type="term" value="P:proteasome-mediated ubiquitin-dependent protein catabolic process"/>
    <property type="evidence" value="ECO:0000250"/>
    <property type="project" value="UniProtKB"/>
</dbReference>
<dbReference type="GO" id="GO:0016567">
    <property type="term" value="P:protein ubiquitination"/>
    <property type="evidence" value="ECO:0000318"/>
    <property type="project" value="GO_Central"/>
</dbReference>
<dbReference type="CDD" id="cd05468">
    <property type="entry name" value="pVHL"/>
    <property type="match status" value="1"/>
</dbReference>
<dbReference type="FunFam" id="1.10.750.10:FF:000001">
    <property type="entry name" value="von Hippel-Lindau disease tumor suppressor"/>
    <property type="match status" value="1"/>
</dbReference>
<dbReference type="FunFam" id="2.60.40.780:FF:000001">
    <property type="entry name" value="von Hippel-Lindau disease tumor suppressor"/>
    <property type="match status" value="1"/>
</dbReference>
<dbReference type="Gene3D" id="1.10.750.10">
    <property type="entry name" value="von Hippel-Lindau disease tumour suppressor, alpha domain"/>
    <property type="match status" value="1"/>
</dbReference>
<dbReference type="Gene3D" id="2.60.40.780">
    <property type="entry name" value="von Hippel-Lindau disease tumour suppressor, beta domain"/>
    <property type="match status" value="1"/>
</dbReference>
<dbReference type="InterPro" id="IPR024048">
    <property type="entry name" value="VHL_alpha_dom"/>
</dbReference>
<dbReference type="InterPro" id="IPR037139">
    <property type="entry name" value="VHL_alpha_dom_sf"/>
</dbReference>
<dbReference type="InterPro" id="IPR024053">
    <property type="entry name" value="VHL_beta_dom"/>
</dbReference>
<dbReference type="InterPro" id="IPR037140">
    <property type="entry name" value="VHL_beta_dom_sf"/>
</dbReference>
<dbReference type="InterPro" id="IPR036208">
    <property type="entry name" value="VHL_sf"/>
</dbReference>
<dbReference type="InterPro" id="IPR022772">
    <property type="entry name" value="VHL_tumour_suppress_b/a_dom"/>
</dbReference>
<dbReference type="Pfam" id="PF01847">
    <property type="entry name" value="VHL"/>
    <property type="match status" value="1"/>
</dbReference>
<dbReference type="Pfam" id="PF17211">
    <property type="entry name" value="VHL_C"/>
    <property type="match status" value="1"/>
</dbReference>
<dbReference type="SUPFAM" id="SSF49468">
    <property type="entry name" value="VHL"/>
    <property type="match status" value="1"/>
</dbReference>
<comment type="function">
    <text evidence="2">Involved in the ubiquitination and subsequent proteasomal degradation via the von Hippel-Lindau ubiquitination complex. Seems to act as a target recruitment subunit in the E3 ubiquitin ligase complex and recruits hydroxylated hypoxia-inducible factor (HIF) under normoxic conditions. Involved in transcriptional repression through interaction with HIF1A, HIF1AN and histone deacetylases. Ubiquitinates, in an oxygen-responsive manner, ADRB2. Acts as a negative regulator of mTORC1 by promoting ubiquitination and degradation of RPTOR.</text>
</comment>
<comment type="pathway">
    <text evidence="2">Protein modification; protein ubiquitination.</text>
</comment>
<comment type="subunit">
    <text evidence="2 3">Component of the VBC (VHL-Elongin BC-CUL2) complex; this complex acts as a ubiquitin-ligase E3 and directs proteasome-dependent degradation of targeted proteins. Interacts with CUL2; this interaction is dependent on the integrity of the trimeric VBC complex. Interacts (via the beta domain) with HIF1A (via the NTAD domain); this interaction mediates degradation of HIF1A in normoxia and, in hypoxia, prevents ubiquitination and degradation of HIF1A by mediating hypoxia-induced translocation to the nucleus, a process which requires a hypoxia-dependent regulatory signal. Interacts with ADRB2; the interaction, in normoxia, is dependent on hydroxylation of ADRB2 and the subsequent VCB-mediated ubiquitination and degradation of ADRB2. Under hypoxia, hydroxylation, interaction with VHL, ubiquitination and subsequent degradation of ADRB2 are dramatically decreased. Interacts with RNF139, USP33 and JADE1 (By similarity). Found in a complex composed of LIMD1, VHL, EGLN1/PHD2, ELOB and CUL2. Interacts with LIMD1 (via LIM zinc-binding 2). Interacts with AJUBA (via LIM domains) and WTIP (via LIM domains) (By similarity). Interacts with EPAS1. Interacts with CARD9 (By similarity). Interacts with DCUN1D1 independently of CUL2; this interaction engages DCUN1D1 in the VCB complex and triggers CUL2 neddylation and consequently cullin ring ligase (CRL) substrates polyubiquitylation (By similarity). Interacts with ALAS1 (hydroxylated form) (By similarity). Interacts with IGFBP1 (By similarity).</text>
</comment>
<comment type="subcellular location">
    <subcellularLocation>
        <location evidence="2">Cytoplasm</location>
    </subcellularLocation>
    <subcellularLocation>
        <location evidence="2">Cell membrane</location>
        <topology evidence="2">Peripheral membrane protein</topology>
    </subcellularLocation>
    <subcellularLocation>
        <location evidence="2">Endoplasmic reticulum</location>
    </subcellularLocation>
    <subcellularLocation>
        <location evidence="2">Nucleus</location>
    </subcellularLocation>
    <text evidence="2">Found predominantly in the cytoplasm and with less amounts nuclear or membrane-associated. Colocalizes with ADRB2 at the cell membrane.</text>
</comment>
<comment type="domain">
    <text>The Elongin BC complex binding domain is also known as BC-box with the consensus [APST]-L-x(3)-C-x(3)-[AILV].</text>
</comment>
<comment type="similarity">
    <text evidence="5">Belongs to the VHL family.</text>
</comment>
<evidence type="ECO:0000250" key="1"/>
<evidence type="ECO:0000250" key="2">
    <source>
        <dbReference type="UniProtKB" id="P40337"/>
    </source>
</evidence>
<evidence type="ECO:0000250" key="3">
    <source>
        <dbReference type="UniProtKB" id="Q64259"/>
    </source>
</evidence>
<evidence type="ECO:0000256" key="4">
    <source>
        <dbReference type="SAM" id="MobiDB-lite"/>
    </source>
</evidence>
<evidence type="ECO:0000305" key="5"/>
<organism>
    <name type="scientific">Canis lupus familiaris</name>
    <name type="common">Dog</name>
    <name type="synonym">Canis familiaris</name>
    <dbReference type="NCBI Taxonomy" id="9615"/>
    <lineage>
        <taxon>Eukaryota</taxon>
        <taxon>Metazoa</taxon>
        <taxon>Chordata</taxon>
        <taxon>Craniata</taxon>
        <taxon>Vertebrata</taxon>
        <taxon>Euteleostomi</taxon>
        <taxon>Mammalia</taxon>
        <taxon>Eutheria</taxon>
        <taxon>Laurasiatheria</taxon>
        <taxon>Carnivora</taxon>
        <taxon>Caniformia</taxon>
        <taxon>Canidae</taxon>
        <taxon>Canis</taxon>
    </lineage>
</organism>
<name>VHL_CANLF</name>
<reference key="1">
    <citation type="submission" date="2004-09" db="EMBL/GenBank/DDBJ databases">
        <title>cDNA sequence of canine von Hippel-Lindau disease tumor suppressor gene.</title>
        <authorList>
            <person name="Kobayashi N."/>
            <person name="Sato T."/>
            <person name="Shibuya H."/>
            <person name="Suzuki K."/>
        </authorList>
    </citation>
    <scope>NUCLEOTIDE SEQUENCE [MRNA]</scope>
</reference>
<gene>
    <name type="primary">VHL</name>
</gene>
<feature type="chain" id="PRO_0000065808" description="von Hippel-Lindau disease tumor suppressor">
    <location>
        <begin position="1"/>
        <end position="219"/>
    </location>
</feature>
<feature type="region of interest" description="Disordered" evidence="4">
    <location>
        <begin position="1"/>
        <end position="57"/>
    </location>
</feature>
<feature type="region of interest" description="Interaction with Elongin BC complex" evidence="1">
    <location>
        <begin position="157"/>
        <end position="166"/>
    </location>
</feature>
<feature type="compositionally biased region" description="Acidic residues" evidence="4">
    <location>
        <begin position="9"/>
        <end position="47"/>
    </location>
</feature>
<feature type="compositionally biased region" description="Low complexity" evidence="4">
    <location>
        <begin position="48"/>
        <end position="57"/>
    </location>
</feature>
<keyword id="KW-1003">Cell membrane</keyword>
<keyword id="KW-0963">Cytoplasm</keyword>
<keyword id="KW-0256">Endoplasmic reticulum</keyword>
<keyword id="KW-0472">Membrane</keyword>
<keyword id="KW-0539">Nucleus</keyword>
<keyword id="KW-1185">Reference proteome</keyword>
<keyword id="KW-0043">Tumor suppressor</keyword>
<keyword id="KW-0833">Ubl conjugation pathway</keyword>
<protein>
    <recommendedName>
        <fullName>von Hippel-Lindau disease tumor suppressor</fullName>
    </recommendedName>
    <alternativeName>
        <fullName>pVHL</fullName>
    </alternativeName>
</protein>
<accession>Q5Q9Z2</accession>
<sequence>MPRKAGSVEEAEAGAEEVGAEEVGPEESGGEESGAEESGPEESDPEEPGAAAEMEAGQPRPVLRSVNSCEPSQVIFCNRSPRVVLPVWLNFDGEPQPYPTLPPGTGRRIHSYRGHLWLFRDAGTYDGLLVNQTELFVPSLNVDGQPIFANITLPVYTLKERCLQVVRSLVKPENYRRLDIVRSLYEDLEDHPNVRKDLERLAQEHIENQRMEGETEDFN</sequence>